<proteinExistence type="inferred from homology"/>
<gene>
    <name evidence="1" type="primary">hisG</name>
    <name type="ordered locus">Shal_1824</name>
</gene>
<evidence type="ECO:0000255" key="1">
    <source>
        <dbReference type="HAMAP-Rule" id="MF_00079"/>
    </source>
</evidence>
<keyword id="KW-0028">Amino-acid biosynthesis</keyword>
<keyword id="KW-0067">ATP-binding</keyword>
<keyword id="KW-0963">Cytoplasm</keyword>
<keyword id="KW-0328">Glycosyltransferase</keyword>
<keyword id="KW-0368">Histidine biosynthesis</keyword>
<keyword id="KW-0460">Magnesium</keyword>
<keyword id="KW-0479">Metal-binding</keyword>
<keyword id="KW-0547">Nucleotide-binding</keyword>
<keyword id="KW-0808">Transferase</keyword>
<dbReference type="EC" id="2.4.2.17" evidence="1"/>
<dbReference type="EMBL" id="CP000931">
    <property type="protein sequence ID" value="ABZ76389.1"/>
    <property type="molecule type" value="Genomic_DNA"/>
</dbReference>
<dbReference type="RefSeq" id="WP_012276921.1">
    <property type="nucleotide sequence ID" value="NC_010334.1"/>
</dbReference>
<dbReference type="SMR" id="B0TRH1"/>
<dbReference type="STRING" id="458817.Shal_1824"/>
<dbReference type="KEGG" id="shl:Shal_1824"/>
<dbReference type="eggNOG" id="COG0040">
    <property type="taxonomic scope" value="Bacteria"/>
</dbReference>
<dbReference type="HOGENOM" id="CLU_038115_1_0_6"/>
<dbReference type="OrthoDB" id="9801867at2"/>
<dbReference type="UniPathway" id="UPA00031">
    <property type="reaction ID" value="UER00006"/>
</dbReference>
<dbReference type="Proteomes" id="UP000001317">
    <property type="component" value="Chromosome"/>
</dbReference>
<dbReference type="GO" id="GO:0005737">
    <property type="term" value="C:cytoplasm"/>
    <property type="evidence" value="ECO:0007669"/>
    <property type="project" value="UniProtKB-SubCell"/>
</dbReference>
<dbReference type="GO" id="GO:0005524">
    <property type="term" value="F:ATP binding"/>
    <property type="evidence" value="ECO:0007669"/>
    <property type="project" value="UniProtKB-KW"/>
</dbReference>
<dbReference type="GO" id="GO:0003879">
    <property type="term" value="F:ATP phosphoribosyltransferase activity"/>
    <property type="evidence" value="ECO:0007669"/>
    <property type="project" value="UniProtKB-UniRule"/>
</dbReference>
<dbReference type="GO" id="GO:0000287">
    <property type="term" value="F:magnesium ion binding"/>
    <property type="evidence" value="ECO:0007669"/>
    <property type="project" value="UniProtKB-UniRule"/>
</dbReference>
<dbReference type="GO" id="GO:0000105">
    <property type="term" value="P:L-histidine biosynthetic process"/>
    <property type="evidence" value="ECO:0007669"/>
    <property type="project" value="UniProtKB-UniRule"/>
</dbReference>
<dbReference type="CDD" id="cd13592">
    <property type="entry name" value="PBP2_HisGL2"/>
    <property type="match status" value="1"/>
</dbReference>
<dbReference type="FunFam" id="3.30.70.120:FF:000002">
    <property type="entry name" value="ATP phosphoribosyltransferase"/>
    <property type="match status" value="1"/>
</dbReference>
<dbReference type="FunFam" id="3.40.190.10:FF:000008">
    <property type="entry name" value="ATP phosphoribosyltransferase"/>
    <property type="match status" value="1"/>
</dbReference>
<dbReference type="Gene3D" id="3.30.70.120">
    <property type="match status" value="1"/>
</dbReference>
<dbReference type="Gene3D" id="3.40.190.10">
    <property type="entry name" value="Periplasmic binding protein-like II"/>
    <property type="match status" value="2"/>
</dbReference>
<dbReference type="HAMAP" id="MF_00079">
    <property type="entry name" value="HisG_Long"/>
    <property type="match status" value="1"/>
</dbReference>
<dbReference type="InterPro" id="IPR020621">
    <property type="entry name" value="ATP-PRT_HisG_long"/>
</dbReference>
<dbReference type="InterPro" id="IPR013820">
    <property type="entry name" value="ATP_PRibTrfase_cat"/>
</dbReference>
<dbReference type="InterPro" id="IPR018198">
    <property type="entry name" value="ATP_PRibTrfase_CS"/>
</dbReference>
<dbReference type="InterPro" id="IPR001348">
    <property type="entry name" value="ATP_PRibTrfase_HisG"/>
</dbReference>
<dbReference type="InterPro" id="IPR013115">
    <property type="entry name" value="HisG_C"/>
</dbReference>
<dbReference type="InterPro" id="IPR011322">
    <property type="entry name" value="N-reg_PII-like_a/b"/>
</dbReference>
<dbReference type="InterPro" id="IPR015867">
    <property type="entry name" value="N-reg_PII/ATP_PRibTrfase_C"/>
</dbReference>
<dbReference type="NCBIfam" id="TIGR00070">
    <property type="entry name" value="hisG"/>
    <property type="match status" value="1"/>
</dbReference>
<dbReference type="NCBIfam" id="TIGR03455">
    <property type="entry name" value="HisG_C-term"/>
    <property type="match status" value="1"/>
</dbReference>
<dbReference type="PANTHER" id="PTHR21403:SF8">
    <property type="entry name" value="ATP PHOSPHORIBOSYLTRANSFERASE"/>
    <property type="match status" value="1"/>
</dbReference>
<dbReference type="PANTHER" id="PTHR21403">
    <property type="entry name" value="ATP PHOSPHORIBOSYLTRANSFERASE ATP-PRTASE"/>
    <property type="match status" value="1"/>
</dbReference>
<dbReference type="Pfam" id="PF01634">
    <property type="entry name" value="HisG"/>
    <property type="match status" value="1"/>
</dbReference>
<dbReference type="Pfam" id="PF08029">
    <property type="entry name" value="HisG_C"/>
    <property type="match status" value="1"/>
</dbReference>
<dbReference type="SUPFAM" id="SSF54913">
    <property type="entry name" value="GlnB-like"/>
    <property type="match status" value="1"/>
</dbReference>
<dbReference type="SUPFAM" id="SSF53850">
    <property type="entry name" value="Periplasmic binding protein-like II"/>
    <property type="match status" value="1"/>
</dbReference>
<dbReference type="PROSITE" id="PS01316">
    <property type="entry name" value="ATP_P_PHORIBOSYLTR"/>
    <property type="match status" value="1"/>
</dbReference>
<organism>
    <name type="scientific">Shewanella halifaxensis (strain HAW-EB4)</name>
    <dbReference type="NCBI Taxonomy" id="458817"/>
    <lineage>
        <taxon>Bacteria</taxon>
        <taxon>Pseudomonadati</taxon>
        <taxon>Pseudomonadota</taxon>
        <taxon>Gammaproteobacteria</taxon>
        <taxon>Alteromonadales</taxon>
        <taxon>Shewanellaceae</taxon>
        <taxon>Shewanella</taxon>
    </lineage>
</organism>
<sequence>MSETTRLRIAIQKSGRLSKESQKLLKSCGVKFNVNEQRLIAHSDNMPIDLLRVRDDDIPGLVMDGVVDLGIIGENVLEEEQIERNSLGKPAECIKLRELDFGACRLSLAVPTEFNYQDASSLEGLRIATSYPNLLRRYMQEKGINYRDCMLKGSVEVAPRAGLSDGICDLVSTGATLEANGLYETEVIYRSMACIIQSTQSQPDDKQALINKILSRINGVVRAKESKYILLHAPTETLEQIVALLPGAENPTVLPLNDDTNRVAIHAVSTEDLFWDTMEQLTQLGASSILVMPIEKMMG</sequence>
<feature type="chain" id="PRO_1000075266" description="ATP phosphoribosyltransferase">
    <location>
        <begin position="1"/>
        <end position="299"/>
    </location>
</feature>
<name>HIS1_SHEHH</name>
<comment type="function">
    <text evidence="1">Catalyzes the condensation of ATP and 5-phosphoribose 1-diphosphate to form N'-(5'-phosphoribosyl)-ATP (PR-ATP). Has a crucial role in the pathway because the rate of histidine biosynthesis seems to be controlled primarily by regulation of HisG enzymatic activity.</text>
</comment>
<comment type="catalytic activity">
    <reaction evidence="1">
        <text>1-(5-phospho-beta-D-ribosyl)-ATP + diphosphate = 5-phospho-alpha-D-ribose 1-diphosphate + ATP</text>
        <dbReference type="Rhea" id="RHEA:18473"/>
        <dbReference type="ChEBI" id="CHEBI:30616"/>
        <dbReference type="ChEBI" id="CHEBI:33019"/>
        <dbReference type="ChEBI" id="CHEBI:58017"/>
        <dbReference type="ChEBI" id="CHEBI:73183"/>
        <dbReference type="EC" id="2.4.2.17"/>
    </reaction>
</comment>
<comment type="cofactor">
    <cofactor evidence="1">
        <name>Mg(2+)</name>
        <dbReference type="ChEBI" id="CHEBI:18420"/>
    </cofactor>
</comment>
<comment type="activity regulation">
    <text evidence="1">Feedback inhibited by histidine.</text>
</comment>
<comment type="pathway">
    <text evidence="1">Amino-acid biosynthesis; L-histidine biosynthesis; L-histidine from 5-phospho-alpha-D-ribose 1-diphosphate: step 1/9.</text>
</comment>
<comment type="subcellular location">
    <subcellularLocation>
        <location evidence="1">Cytoplasm</location>
    </subcellularLocation>
</comment>
<comment type="similarity">
    <text evidence="1">Belongs to the ATP phosphoribosyltransferase family. Long subfamily.</text>
</comment>
<protein>
    <recommendedName>
        <fullName evidence="1">ATP phosphoribosyltransferase</fullName>
        <shortName evidence="1">ATP-PRT</shortName>
        <shortName evidence="1">ATP-PRTase</shortName>
        <ecNumber evidence="1">2.4.2.17</ecNumber>
    </recommendedName>
</protein>
<accession>B0TRH1</accession>
<reference key="1">
    <citation type="submission" date="2008-01" db="EMBL/GenBank/DDBJ databases">
        <title>Complete sequence of Shewanella halifaxensis HAW-EB4.</title>
        <authorList>
            <consortium name="US DOE Joint Genome Institute"/>
            <person name="Copeland A."/>
            <person name="Lucas S."/>
            <person name="Lapidus A."/>
            <person name="Glavina del Rio T."/>
            <person name="Dalin E."/>
            <person name="Tice H."/>
            <person name="Bruce D."/>
            <person name="Goodwin L."/>
            <person name="Pitluck S."/>
            <person name="Sims D."/>
            <person name="Brettin T."/>
            <person name="Detter J.C."/>
            <person name="Han C."/>
            <person name="Kuske C.R."/>
            <person name="Schmutz J."/>
            <person name="Larimer F."/>
            <person name="Land M."/>
            <person name="Hauser L."/>
            <person name="Kyrpides N."/>
            <person name="Kim E."/>
            <person name="Zhao J.-S."/>
            <person name="Richardson P."/>
        </authorList>
    </citation>
    <scope>NUCLEOTIDE SEQUENCE [LARGE SCALE GENOMIC DNA]</scope>
    <source>
        <strain>HAW-EB4</strain>
    </source>
</reference>